<gene>
    <name evidence="5" type="primary">dpfgJ</name>
    <name type="ORF">FG04590</name>
    <name type="ORF">FGRAMPH1_01T15651</name>
</gene>
<proteinExistence type="evidence at protein level"/>
<comment type="function">
    <text evidence="4 7">Cytochrome P450 monooxygenase; part of the gene cluster that mediates the biosynthesis of diterpenoid pyrones (PubMed:32286350). The first step of the pathway is the synthesis of the alpha-pyrone moiety by the polyketide synthase dpfgA via condensation of one acetyl-CoA starter unit with 3 malonyl-CoA units and 2 methylations (Probable). The alpha-pyrone is then combined with geranylgeranyl pyrophosphate (GGPP) formed by the GGPP synthase dpfgD through the action of the prenyltransferase dpfgC to yield a linear alpha-pyrone diterpenoid (Probable). Subsequent steps in the diterpenoid pyrone biosynthetic pathway involve the decalin core formation, which is initiated by the epoxidation of the C10-C11 olefin by the FAD-dependent oxidoreductase dpfgE, and is followed by a cyclization cascade catalyzed by the terpene cyclase dpfgB (Probable). The short chain dehydrogenase/reductase dpfgG then oxidizes the 8S hydroxy group to a ketone and the short chain dehydrogenase/reductase dpfgH reduces the ketone to the 8R hydroxy group to yield higginsianin B (PubMed:32286350). Higginsianin B is further methylated by the methyltransferase dpfgI to produce the intermediate named FDDP B (PubMed:32286350). The cytochrome P450 monooxygenase dfgpJ then catalyzes a three-step oxidation at C-27 to generate a carboxylic acid as well as C-26 hydroxylation (PubMed:32286350). Finally, methyltransferase dpfgK methylates the carboxylic acid generated by dpfgJ, yielding the final diterpenoid pyrones from the pathway which were named FDDP D and FDDP E (PubMed:32286350).</text>
</comment>
<comment type="cofactor">
    <cofactor evidence="1">
        <name>heme</name>
        <dbReference type="ChEBI" id="CHEBI:30413"/>
    </cofactor>
</comment>
<comment type="pathway">
    <text evidence="4">Secondary metabolite biosynthesis; terpenoid biosynthesis.</text>
</comment>
<comment type="subcellular location">
    <subcellularLocation>
        <location evidence="2">Membrane</location>
        <topology evidence="2">Single-pass membrane protein</topology>
    </subcellularLocation>
</comment>
<comment type="biotechnology">
    <text evidence="4">Diterpenoid pyrones display various biological activities and FDDP E shows anti-HIV activity (PubMed:32286350). FDDP D and FDDP E show also inhibitory activity of 42-mer-amyloid beta aggregation that is involved in the pathogenesis of Alzheimer's disease (PubMed:32286350).</text>
</comment>
<comment type="similarity">
    <text evidence="6">Belongs to the cytochrome P450 family.</text>
</comment>
<protein>
    <recommendedName>
        <fullName evidence="5">Cytochrome P450 monooxygenase dpfgJ</fullName>
        <ecNumber evidence="4">1.-.-.-</ecNumber>
    </recommendedName>
    <alternativeName>
        <fullName evidence="5">Diterpenoid pyrone biosynthesis cluster protein J</fullName>
    </alternativeName>
</protein>
<organism>
    <name type="scientific">Gibberella zeae (strain ATCC MYA-4620 / CBS 123657 / FGSC 9075 / NRRL 31084 / PH-1)</name>
    <name type="common">Wheat head blight fungus</name>
    <name type="synonym">Fusarium graminearum</name>
    <dbReference type="NCBI Taxonomy" id="229533"/>
    <lineage>
        <taxon>Eukaryota</taxon>
        <taxon>Fungi</taxon>
        <taxon>Dikarya</taxon>
        <taxon>Ascomycota</taxon>
        <taxon>Pezizomycotina</taxon>
        <taxon>Sordariomycetes</taxon>
        <taxon>Hypocreomycetidae</taxon>
        <taxon>Hypocreales</taxon>
        <taxon>Nectriaceae</taxon>
        <taxon>Fusarium</taxon>
    </lineage>
</organism>
<name>DPFGJ_GIBZE</name>
<accession>I1RL13</accession>
<evidence type="ECO:0000250" key="1">
    <source>
        <dbReference type="UniProtKB" id="P04798"/>
    </source>
</evidence>
<evidence type="ECO:0000255" key="2"/>
<evidence type="ECO:0000255" key="3">
    <source>
        <dbReference type="PROSITE-ProRule" id="PRU00498"/>
    </source>
</evidence>
<evidence type="ECO:0000269" key="4">
    <source>
    </source>
</evidence>
<evidence type="ECO:0000303" key="5">
    <source>
    </source>
</evidence>
<evidence type="ECO:0000305" key="6"/>
<evidence type="ECO:0000305" key="7">
    <source>
    </source>
</evidence>
<dbReference type="EC" id="1.-.-.-" evidence="4"/>
<dbReference type="EMBL" id="HG970333">
    <property type="protein sequence ID" value="CEF79625.1"/>
    <property type="molecule type" value="Genomic_DNA"/>
</dbReference>
<dbReference type="RefSeq" id="XP_011320991.1">
    <property type="nucleotide sequence ID" value="XM_011322689.1"/>
</dbReference>
<dbReference type="SMR" id="I1RL13"/>
<dbReference type="STRING" id="229533.I1RL13"/>
<dbReference type="GlyCosmos" id="I1RL13">
    <property type="glycosylation" value="1 site, No reported glycans"/>
</dbReference>
<dbReference type="KEGG" id="fgr:FGSG_04590"/>
<dbReference type="VEuPathDB" id="FungiDB:FGRAMPH1_01G15651"/>
<dbReference type="eggNOG" id="KOG0158">
    <property type="taxonomic scope" value="Eukaryota"/>
</dbReference>
<dbReference type="HOGENOM" id="CLU_001570_14_11_1"/>
<dbReference type="InParanoid" id="I1RL13"/>
<dbReference type="OrthoDB" id="84357at110618"/>
<dbReference type="UniPathway" id="UPA00213"/>
<dbReference type="Proteomes" id="UP000070720">
    <property type="component" value="Chromosome 2"/>
</dbReference>
<dbReference type="GO" id="GO:0016020">
    <property type="term" value="C:membrane"/>
    <property type="evidence" value="ECO:0007669"/>
    <property type="project" value="UniProtKB-SubCell"/>
</dbReference>
<dbReference type="GO" id="GO:0020037">
    <property type="term" value="F:heme binding"/>
    <property type="evidence" value="ECO:0007669"/>
    <property type="project" value="InterPro"/>
</dbReference>
<dbReference type="GO" id="GO:0005506">
    <property type="term" value="F:iron ion binding"/>
    <property type="evidence" value="ECO:0007669"/>
    <property type="project" value="InterPro"/>
</dbReference>
<dbReference type="GO" id="GO:0004497">
    <property type="term" value="F:monooxygenase activity"/>
    <property type="evidence" value="ECO:0007669"/>
    <property type="project" value="UniProtKB-KW"/>
</dbReference>
<dbReference type="GO" id="GO:0016705">
    <property type="term" value="F:oxidoreductase activity, acting on paired donors, with incorporation or reduction of molecular oxygen"/>
    <property type="evidence" value="ECO:0007669"/>
    <property type="project" value="InterPro"/>
</dbReference>
<dbReference type="GO" id="GO:0016114">
    <property type="term" value="P:terpenoid biosynthetic process"/>
    <property type="evidence" value="ECO:0007669"/>
    <property type="project" value="UniProtKB-UniPathway"/>
</dbReference>
<dbReference type="Gene3D" id="1.10.630.10">
    <property type="entry name" value="Cytochrome P450"/>
    <property type="match status" value="1"/>
</dbReference>
<dbReference type="InterPro" id="IPR001128">
    <property type="entry name" value="Cyt_P450"/>
</dbReference>
<dbReference type="InterPro" id="IPR017972">
    <property type="entry name" value="Cyt_P450_CS"/>
</dbReference>
<dbReference type="InterPro" id="IPR002403">
    <property type="entry name" value="Cyt_P450_E_grp-IV"/>
</dbReference>
<dbReference type="InterPro" id="IPR036396">
    <property type="entry name" value="Cyt_P450_sf"/>
</dbReference>
<dbReference type="InterPro" id="IPR050121">
    <property type="entry name" value="Cytochrome_P450_monoxygenase"/>
</dbReference>
<dbReference type="PANTHER" id="PTHR24305">
    <property type="entry name" value="CYTOCHROME P450"/>
    <property type="match status" value="1"/>
</dbReference>
<dbReference type="PANTHER" id="PTHR24305:SF162">
    <property type="entry name" value="P450, PUTATIVE (EUROFUNG)-RELATED"/>
    <property type="match status" value="1"/>
</dbReference>
<dbReference type="Pfam" id="PF00067">
    <property type="entry name" value="p450"/>
    <property type="match status" value="1"/>
</dbReference>
<dbReference type="PRINTS" id="PR00465">
    <property type="entry name" value="EP450IV"/>
</dbReference>
<dbReference type="PRINTS" id="PR00385">
    <property type="entry name" value="P450"/>
</dbReference>
<dbReference type="SUPFAM" id="SSF48264">
    <property type="entry name" value="Cytochrome P450"/>
    <property type="match status" value="1"/>
</dbReference>
<dbReference type="PROSITE" id="PS00086">
    <property type="entry name" value="CYTOCHROME_P450"/>
    <property type="match status" value="1"/>
</dbReference>
<feature type="chain" id="PRO_0000451556" description="Cytochrome P450 monooxygenase dpfgJ">
    <location>
        <begin position="1"/>
        <end position="481"/>
    </location>
</feature>
<feature type="transmembrane region" description="Helical" evidence="2">
    <location>
        <begin position="23"/>
        <end position="43"/>
    </location>
</feature>
<feature type="binding site" description="axial binding residue" evidence="1">
    <location>
        <position position="427"/>
    </location>
    <ligand>
        <name>heme</name>
        <dbReference type="ChEBI" id="CHEBI:30413"/>
    </ligand>
    <ligandPart>
        <name>Fe</name>
        <dbReference type="ChEBI" id="CHEBI:18248"/>
    </ligandPart>
</feature>
<feature type="glycosylation site" description="N-linked (GlcNAc...) asparagine" evidence="3">
    <location>
        <position position="338"/>
    </location>
</feature>
<keyword id="KW-0325">Glycoprotein</keyword>
<keyword id="KW-0349">Heme</keyword>
<keyword id="KW-0408">Iron</keyword>
<keyword id="KW-0472">Membrane</keyword>
<keyword id="KW-0479">Metal-binding</keyword>
<keyword id="KW-0503">Monooxygenase</keyword>
<keyword id="KW-0560">Oxidoreductase</keyword>
<keyword id="KW-1185">Reference proteome</keyword>
<keyword id="KW-0812">Transmembrane</keyword>
<keyword id="KW-1133">Transmembrane helix</keyword>
<sequence length="481" mass="53867">MEDLLDQVVVELHRARSCLSDPLVFTQAAVIGSILFVFLLGLYNYFLHPIAHIKGPFLAAVTPISLIRALRDIHNPGPDNHHYTKRGTSEDLILRFVFGANNILLVDEGEDHKRLRGALQPAFTAKAMRDQQDITHYHVQKTVERLLEAAMDPSQTISLTKELNKLVWGNVGNLAFGEPATLEQLENHEKAKDLHAQIAPILEFFQYLNGNPILGRAARGLVGISRKVFGLSGNILGKDQLRRHIASQQGQKNFLTAILGAKESSGLSFDEIHSNMLLLLMGGYDSSAASLSAIFYHLLREPQQYKRLQSELHHAYSSVNDITCNSLLSQPMLNACINESLRLVPPFNGHGSHRVTTSGTMIDGVWVPAGTLISADFYSLHRDPSCWAFPDEYRPERWLKEHQGPGTPFENDVKTAWRPFSLGPRVCVGREMALQSIRLAVSKIVYTFDMTLANRDFVWDRDAGSHYMWHDFDIAVTLAKA</sequence>
<reference key="1">
    <citation type="journal article" date="2007" name="Science">
        <title>The Fusarium graminearum genome reveals a link between localized polymorphism and pathogen specialization.</title>
        <authorList>
            <person name="Cuomo C.A."/>
            <person name="Gueldener U."/>
            <person name="Xu J.-R."/>
            <person name="Trail F."/>
            <person name="Turgeon B.G."/>
            <person name="Di Pietro A."/>
            <person name="Walton J.D."/>
            <person name="Ma L.-J."/>
            <person name="Baker S.E."/>
            <person name="Rep M."/>
            <person name="Adam G."/>
            <person name="Antoniw J."/>
            <person name="Baldwin T."/>
            <person name="Calvo S.E."/>
            <person name="Chang Y.-L."/>
            <person name="DeCaprio D."/>
            <person name="Gale L.R."/>
            <person name="Gnerre S."/>
            <person name="Goswami R.S."/>
            <person name="Hammond-Kosack K."/>
            <person name="Harris L.J."/>
            <person name="Hilburn K."/>
            <person name="Kennell J.C."/>
            <person name="Kroken S."/>
            <person name="Magnuson J.K."/>
            <person name="Mannhaupt G."/>
            <person name="Mauceli E.W."/>
            <person name="Mewes H.-W."/>
            <person name="Mitterbauer R."/>
            <person name="Muehlbauer G."/>
            <person name="Muensterkoetter M."/>
            <person name="Nelson D."/>
            <person name="O'Donnell K."/>
            <person name="Ouellet T."/>
            <person name="Qi W."/>
            <person name="Quesneville H."/>
            <person name="Roncero M.I.G."/>
            <person name="Seong K.-Y."/>
            <person name="Tetko I.V."/>
            <person name="Urban M."/>
            <person name="Waalwijk C."/>
            <person name="Ward T.J."/>
            <person name="Yao J."/>
            <person name="Birren B.W."/>
            <person name="Kistler H.C."/>
        </authorList>
    </citation>
    <scope>NUCLEOTIDE SEQUENCE [LARGE SCALE GENOMIC DNA]</scope>
    <source>
        <strain>ATCC MYA-4620 / CBS 123657 / FGSC 9075 / NRRL 31084 / PH-1</strain>
    </source>
</reference>
<reference key="2">
    <citation type="journal article" date="2010" name="Nature">
        <title>Comparative genomics reveals mobile pathogenicity chromosomes in Fusarium.</title>
        <authorList>
            <person name="Ma L.-J."/>
            <person name="van der Does H.C."/>
            <person name="Borkovich K.A."/>
            <person name="Coleman J.J."/>
            <person name="Daboussi M.-J."/>
            <person name="Di Pietro A."/>
            <person name="Dufresne M."/>
            <person name="Freitag M."/>
            <person name="Grabherr M."/>
            <person name="Henrissat B."/>
            <person name="Houterman P.M."/>
            <person name="Kang S."/>
            <person name="Shim W.-B."/>
            <person name="Woloshuk C."/>
            <person name="Xie X."/>
            <person name="Xu J.-R."/>
            <person name="Antoniw J."/>
            <person name="Baker S.E."/>
            <person name="Bluhm B.H."/>
            <person name="Breakspear A."/>
            <person name="Brown D.W."/>
            <person name="Butchko R.A.E."/>
            <person name="Chapman S."/>
            <person name="Coulson R."/>
            <person name="Coutinho P.M."/>
            <person name="Danchin E.G.J."/>
            <person name="Diener A."/>
            <person name="Gale L.R."/>
            <person name="Gardiner D.M."/>
            <person name="Goff S."/>
            <person name="Hammond-Kosack K.E."/>
            <person name="Hilburn K."/>
            <person name="Hua-Van A."/>
            <person name="Jonkers W."/>
            <person name="Kazan K."/>
            <person name="Kodira C.D."/>
            <person name="Koehrsen M."/>
            <person name="Kumar L."/>
            <person name="Lee Y.-H."/>
            <person name="Li L."/>
            <person name="Manners J.M."/>
            <person name="Miranda-Saavedra D."/>
            <person name="Mukherjee M."/>
            <person name="Park G."/>
            <person name="Park J."/>
            <person name="Park S.-Y."/>
            <person name="Proctor R.H."/>
            <person name="Regev A."/>
            <person name="Ruiz-Roldan M.C."/>
            <person name="Sain D."/>
            <person name="Sakthikumar S."/>
            <person name="Sykes S."/>
            <person name="Schwartz D.C."/>
            <person name="Turgeon B.G."/>
            <person name="Wapinski I."/>
            <person name="Yoder O."/>
            <person name="Young S."/>
            <person name="Zeng Q."/>
            <person name="Zhou S."/>
            <person name="Galagan J."/>
            <person name="Cuomo C.A."/>
            <person name="Kistler H.C."/>
            <person name="Rep M."/>
        </authorList>
    </citation>
    <scope>GENOME REANNOTATION</scope>
    <source>
        <strain>ATCC MYA-4620 / CBS 123657 / FGSC 9075 / NRRL 31084 / PH-1</strain>
    </source>
</reference>
<reference key="3">
    <citation type="journal article" date="2015" name="BMC Genomics">
        <title>The completed genome sequence of the pathogenic ascomycete fungus Fusarium graminearum.</title>
        <authorList>
            <person name="King R."/>
            <person name="Urban M."/>
            <person name="Hammond-Kosack M.C.U."/>
            <person name="Hassani-Pak K."/>
            <person name="Hammond-Kosack K.E."/>
        </authorList>
    </citation>
    <scope>NUCLEOTIDE SEQUENCE [LARGE SCALE GENOMIC DNA]</scope>
    <source>
        <strain>ATCC MYA-4620 / CBS 123657 / FGSC 9075 / NRRL 31084 / PH-1</strain>
    </source>
</reference>
<reference key="4">
    <citation type="journal article" date="2020" name="Nat. Commun.">
        <title>Synthetic biology based construction of biological activity-related library of fungal decalin-containing diterpenoid pyrones.</title>
        <authorList>
            <person name="Tsukada K."/>
            <person name="Shinki S."/>
            <person name="Kaneko A."/>
            <person name="Murakami K."/>
            <person name="Irie K."/>
            <person name="Murai M."/>
            <person name="Miyoshi H."/>
            <person name="Dan S."/>
            <person name="Kawaji K."/>
            <person name="Hayashi H."/>
            <person name="Kodama E.N."/>
            <person name="Hori A."/>
            <person name="Salim E."/>
            <person name="Kuraishi T."/>
            <person name="Hirata N."/>
            <person name="Kanda Y."/>
            <person name="Asai T."/>
        </authorList>
    </citation>
    <scope>FUNCTION</scope>
    <scope>CATALYTIC ACTIVITY</scope>
    <scope>PATHWAY</scope>
    <scope>BIOTECHNOLOGY</scope>
</reference>